<comment type="function">
    <text evidence="1">Part of the high-affinity ATP-driven potassium transport (or Kdp) system, which catalyzes the hydrolysis of ATP coupled with the electrogenic transport of potassium into the cytoplasm. This subunit binds the extracellular potassium ions and delivers the ions to the membrane domain of KdpB through an intramembrane tunnel.</text>
</comment>
<comment type="subunit">
    <text evidence="1">The system is composed of three essential subunits: KdpA, KdpB and KdpC.</text>
</comment>
<comment type="subcellular location">
    <subcellularLocation>
        <location evidence="1">Cell membrane</location>
        <topology evidence="1">Multi-pass membrane protein</topology>
    </subcellularLocation>
</comment>
<comment type="similarity">
    <text evidence="1">Belongs to the KdpA family.</text>
</comment>
<organism>
    <name type="scientific">Bacillus cereus (strain Q1)</name>
    <dbReference type="NCBI Taxonomy" id="361100"/>
    <lineage>
        <taxon>Bacteria</taxon>
        <taxon>Bacillati</taxon>
        <taxon>Bacillota</taxon>
        <taxon>Bacilli</taxon>
        <taxon>Bacillales</taxon>
        <taxon>Bacillaceae</taxon>
        <taxon>Bacillus</taxon>
        <taxon>Bacillus cereus group</taxon>
    </lineage>
</organism>
<proteinExistence type="inferred from homology"/>
<sequence>MIWVAVVITMLLFILVAKPTGIYLEKAFQGSKKLDKVFGPFEKLIFKITGVKEYNQTWKQYALSLVLLNGFMIVVVYFIFRLQGVLPLNPAHIEGMEPTLAFNTAISFMADTNLQHYSGENGLSYLSQLIGITFLMFAAPATTLALVMAFIRGLAGKELGNFFVDFTRALTRVFLPIAFMAALVFVALGVPQTLDGAVTAQTIDGAKQSILRGPVASFVSIKELGNNGGGFFGANSTHPFENPGQMSNILQMMLMMLLPTALPFTYGRMVGNKKQGRILFVSLFMVFLLGFITITTSELNGNPALNGMGIEHVQGSTEGKEVRFGTVFSSLYATVTTAAETGAVNTMHDTLTPIGGLVPLVNMMLNTVYGGVGAGFVNIIMYAIIAVFISGLMVGRTPEFLGKKIEGKEMKLIAVTILFHPLLILGFSALALSTSLGTDAISHSGFHGLTQVVYEYTSSAANNGSGFEGLADNTPFWNITTGLVMFLGRYFSLITMLAVAASLKEKTVVPETVGTFRTDNSLFGGIFIGTIVIVGALTFFPMLVLGPIAEFLTLK</sequence>
<keyword id="KW-1003">Cell membrane</keyword>
<keyword id="KW-0406">Ion transport</keyword>
<keyword id="KW-0472">Membrane</keyword>
<keyword id="KW-0630">Potassium</keyword>
<keyword id="KW-0633">Potassium transport</keyword>
<keyword id="KW-0812">Transmembrane</keyword>
<keyword id="KW-1133">Transmembrane helix</keyword>
<keyword id="KW-0813">Transport</keyword>
<protein>
    <recommendedName>
        <fullName evidence="1">Potassium-transporting ATPase potassium-binding subunit</fullName>
    </recommendedName>
    <alternativeName>
        <fullName evidence="1">ATP phosphohydrolase [potassium-transporting] A chain</fullName>
    </alternativeName>
    <alternativeName>
        <fullName evidence="1">Potassium-binding and translocating subunit A</fullName>
    </alternativeName>
    <alternativeName>
        <fullName evidence="1">Potassium-translocating ATPase A chain</fullName>
    </alternativeName>
</protein>
<dbReference type="EMBL" id="CP000227">
    <property type="protein sequence ID" value="ACM11259.1"/>
    <property type="molecule type" value="Genomic_DNA"/>
</dbReference>
<dbReference type="SMR" id="B9J529"/>
<dbReference type="KEGG" id="bcq:BCQ_0829"/>
<dbReference type="HOGENOM" id="CLU_018614_3_0_9"/>
<dbReference type="Proteomes" id="UP000000441">
    <property type="component" value="Chromosome"/>
</dbReference>
<dbReference type="GO" id="GO:0005886">
    <property type="term" value="C:plasma membrane"/>
    <property type="evidence" value="ECO:0007669"/>
    <property type="project" value="UniProtKB-SubCell"/>
</dbReference>
<dbReference type="GO" id="GO:0008556">
    <property type="term" value="F:P-type potassium transmembrane transporter activity"/>
    <property type="evidence" value="ECO:0007669"/>
    <property type="project" value="InterPro"/>
</dbReference>
<dbReference type="GO" id="GO:0030955">
    <property type="term" value="F:potassium ion binding"/>
    <property type="evidence" value="ECO:0007669"/>
    <property type="project" value="UniProtKB-UniRule"/>
</dbReference>
<dbReference type="HAMAP" id="MF_00275">
    <property type="entry name" value="KdpA"/>
    <property type="match status" value="1"/>
</dbReference>
<dbReference type="InterPro" id="IPR004623">
    <property type="entry name" value="KdpA"/>
</dbReference>
<dbReference type="NCBIfam" id="TIGR00680">
    <property type="entry name" value="kdpA"/>
    <property type="match status" value="1"/>
</dbReference>
<dbReference type="PANTHER" id="PTHR30607">
    <property type="entry name" value="POTASSIUM-TRANSPORTING ATPASE A CHAIN"/>
    <property type="match status" value="1"/>
</dbReference>
<dbReference type="PANTHER" id="PTHR30607:SF2">
    <property type="entry name" value="POTASSIUM-TRANSPORTING ATPASE POTASSIUM-BINDING SUBUNIT"/>
    <property type="match status" value="1"/>
</dbReference>
<dbReference type="Pfam" id="PF03814">
    <property type="entry name" value="KdpA"/>
    <property type="match status" value="1"/>
</dbReference>
<dbReference type="PIRSF" id="PIRSF001294">
    <property type="entry name" value="K_ATPaseA"/>
    <property type="match status" value="1"/>
</dbReference>
<evidence type="ECO:0000255" key="1">
    <source>
        <dbReference type="HAMAP-Rule" id="MF_00275"/>
    </source>
</evidence>
<reference key="1">
    <citation type="journal article" date="2009" name="J. Bacteriol.">
        <title>Complete genome sequence of the extremophilic Bacillus cereus strain Q1 with industrial applications.</title>
        <authorList>
            <person name="Xiong Z."/>
            <person name="Jiang Y."/>
            <person name="Qi D."/>
            <person name="Lu H."/>
            <person name="Yang F."/>
            <person name="Yang J."/>
            <person name="Chen L."/>
            <person name="Sun L."/>
            <person name="Xu X."/>
            <person name="Xue Y."/>
            <person name="Zhu Y."/>
            <person name="Jin Q."/>
        </authorList>
    </citation>
    <scope>NUCLEOTIDE SEQUENCE [LARGE SCALE GENOMIC DNA]</scope>
    <source>
        <strain>Q1</strain>
    </source>
</reference>
<accession>B9J529</accession>
<gene>
    <name evidence="1" type="primary">kdpA</name>
    <name type="ordered locus">BCQ_0829</name>
</gene>
<feature type="chain" id="PRO_1000190732" description="Potassium-transporting ATPase potassium-binding subunit">
    <location>
        <begin position="1"/>
        <end position="555"/>
    </location>
</feature>
<feature type="transmembrane region" description="Helical" evidence="1">
    <location>
        <begin position="2"/>
        <end position="22"/>
    </location>
</feature>
<feature type="transmembrane region" description="Helical" evidence="1">
    <location>
        <begin position="60"/>
        <end position="80"/>
    </location>
</feature>
<feature type="transmembrane region" description="Helical" evidence="1">
    <location>
        <begin position="130"/>
        <end position="150"/>
    </location>
</feature>
<feature type="transmembrane region" description="Helical" evidence="1">
    <location>
        <begin position="173"/>
        <end position="193"/>
    </location>
</feature>
<feature type="transmembrane region" description="Helical" evidence="1">
    <location>
        <begin position="246"/>
        <end position="266"/>
    </location>
</feature>
<feature type="transmembrane region" description="Helical" evidence="1">
    <location>
        <begin position="278"/>
        <end position="298"/>
    </location>
</feature>
<feature type="transmembrane region" description="Helical" evidence="1">
    <location>
        <begin position="374"/>
        <end position="394"/>
    </location>
</feature>
<feature type="transmembrane region" description="Helical" evidence="1">
    <location>
        <begin position="412"/>
        <end position="432"/>
    </location>
</feature>
<feature type="transmembrane region" description="Helical" evidence="1">
    <location>
        <begin position="483"/>
        <end position="503"/>
    </location>
</feature>
<feature type="transmembrane region" description="Helical" evidence="1">
    <location>
        <begin position="525"/>
        <end position="545"/>
    </location>
</feature>
<name>KDPA_BACCQ</name>